<sequence length="1226" mass="134831">MKGNSRHPSVPPPPLAPQSPTSKATAKYTNKDGSKFITVPKGSTPADSAQPSPTITTAANAAPGPQSASTSHTQGHGLGQAEGQVQPVNKKKAKRRQKAAAKAAATQGIANPAPSNGFPSPSPSHAQQSTEADHDDSHDEHLEEFNNRRDSRASNIHENGFAQGATTSSKKSKKKKKKSHAGQNAAELPNSPQHDTYVPAPQLSQHPRPGISKEKIWNTSSQEERERIKEFWLGLSETERKELVRVEKDAVLKKMKEQQKHTCSCTVCGRKRTAIEEELEGLYDAYYEELEQYANHPNQGEAPPMLGRRPSFGSMTGMRPRGLPTSYPSHHQPSHAQIVDHGAEEDDEEEEVEEEYSEDEQDEDDYSDDEPSEELHRSDYPADFFNFGNSLTVQGGILTVADDLLKNDGKKFIEMMEQLAERRMAREEDARDQFGSPFSHSAGDRNAHYHPPADDEVDDEEYDEDYDDDEEEEYDSQDEEETMTEEQRMEEGRRMFQIFAARMFEQRVLTAYREKVARERQNMLLEELADEKRRSEERLVKKQKEAQKKKERQARKKELQAEEKARREEEKMAEEKAKKAEEDRQKEQRRQKEEEKRKQKEAQKKAEEEERRRKEAERQRRNHEREENERKARELKEREKKAREEARLKEKEAREQKEREAKEQKERQERQERQEREKREREAKAKAEMEAAKAAKDKSKQEDRAAQKAAALATTAPVPITLPKRPAQPIQTSVPAAVPALPQQPAAYASPVIPVATPAFPKVPAPAQSRQIHQQESVTTSSGPTSQPGSAVSQNPSPHTLTPILTSPGPVKPPSKSGVAVSGTQNSGVQLPSPAPSTTVNAGSKPLQSQANPFGGPSMNMPFQPTPQPPPGFSNHMQPQYPPFYNPANSYNRVAPGMMAAPPGFSAPLGGRAMSMHSPGFPGPLDSPVSSFAGLPAGLSSLLGKDNVPSHTRQGSGSFEIGPVSSSSQPISRPTPIGRPASVVHGQRRSPEFSTNGTDQAEQEVHLGSSALLEPDDTQQDFPARSHFGLLGTSAPGVRSAPGFGGGPFGMETGFSLPHQNSPWNPVPPLQHNPFVPPPPGFPSSSHHGPWSQAAPPGIMGRNPSIVERSAPWSVTLRKSLCAVCEDLGAGGSSSYDGFIPLGEIMAHMKQFTVNEKEVLDICDTEGNPSNGGGSFIVRDPLSPSGSPLIRYVPDDDASRAPYGPIKHPGDIGSPIVGSGSFHVGS</sequence>
<feature type="chain" id="PRO_0000324455" description="Stress response protein nst1">
    <location>
        <begin position="1"/>
        <end position="1226"/>
    </location>
</feature>
<feature type="region of interest" description="Disordered" evidence="3">
    <location>
        <begin position="1"/>
        <end position="225"/>
    </location>
</feature>
<feature type="region of interest" description="Disordered" evidence="3">
    <location>
        <begin position="294"/>
        <end position="388"/>
    </location>
</feature>
<feature type="region of interest" description="Disordered" evidence="3">
    <location>
        <begin position="423"/>
        <end position="491"/>
    </location>
</feature>
<feature type="region of interest" description="Disordered" evidence="3">
    <location>
        <begin position="526"/>
        <end position="727"/>
    </location>
</feature>
<feature type="region of interest" description="Disordered" evidence="3">
    <location>
        <begin position="757"/>
        <end position="876"/>
    </location>
</feature>
<feature type="region of interest" description="Disordered" evidence="3">
    <location>
        <begin position="944"/>
        <end position="1001"/>
    </location>
</feature>
<feature type="coiled-coil region" evidence="2">
    <location>
        <begin position="517"/>
        <end position="708"/>
    </location>
</feature>
<feature type="compositionally biased region" description="Polar residues" evidence="3">
    <location>
        <begin position="45"/>
        <end position="59"/>
    </location>
</feature>
<feature type="compositionally biased region" description="Basic residues" evidence="3">
    <location>
        <begin position="89"/>
        <end position="99"/>
    </location>
</feature>
<feature type="compositionally biased region" description="Polar residues" evidence="3">
    <location>
        <begin position="113"/>
        <end position="130"/>
    </location>
</feature>
<feature type="compositionally biased region" description="Basic and acidic residues" evidence="3">
    <location>
        <begin position="131"/>
        <end position="152"/>
    </location>
</feature>
<feature type="compositionally biased region" description="Basic residues" evidence="3">
    <location>
        <begin position="170"/>
        <end position="180"/>
    </location>
</feature>
<feature type="compositionally biased region" description="Basic and acidic residues" evidence="3">
    <location>
        <begin position="211"/>
        <end position="225"/>
    </location>
</feature>
<feature type="compositionally biased region" description="Polar residues" evidence="3">
    <location>
        <begin position="326"/>
        <end position="335"/>
    </location>
</feature>
<feature type="compositionally biased region" description="Acidic residues" evidence="3">
    <location>
        <begin position="343"/>
        <end position="372"/>
    </location>
</feature>
<feature type="compositionally biased region" description="Basic and acidic residues" evidence="3">
    <location>
        <begin position="423"/>
        <end position="432"/>
    </location>
</feature>
<feature type="compositionally biased region" description="Basic and acidic residues" evidence="3">
    <location>
        <begin position="442"/>
        <end position="453"/>
    </location>
</feature>
<feature type="compositionally biased region" description="Acidic residues" evidence="3">
    <location>
        <begin position="454"/>
        <end position="484"/>
    </location>
</feature>
<feature type="compositionally biased region" description="Basic and acidic residues" evidence="3">
    <location>
        <begin position="530"/>
        <end position="548"/>
    </location>
</feature>
<feature type="compositionally biased region" description="Basic and acidic residues" evidence="3">
    <location>
        <begin position="556"/>
        <end position="706"/>
    </location>
</feature>
<feature type="compositionally biased region" description="Low complexity" evidence="3">
    <location>
        <begin position="707"/>
        <end position="716"/>
    </location>
</feature>
<feature type="compositionally biased region" description="Low complexity" evidence="3">
    <location>
        <begin position="777"/>
        <end position="790"/>
    </location>
</feature>
<feature type="compositionally biased region" description="Polar residues" evidence="3">
    <location>
        <begin position="791"/>
        <end position="805"/>
    </location>
</feature>
<feature type="compositionally biased region" description="Polar residues" evidence="3">
    <location>
        <begin position="822"/>
        <end position="852"/>
    </location>
</feature>
<dbReference type="EMBL" id="CM002239">
    <property type="protein sequence ID" value="EAA32795.2"/>
    <property type="molecule type" value="Genomic_DNA"/>
</dbReference>
<dbReference type="RefSeq" id="XP_962031.2">
    <property type="nucleotide sequence ID" value="XM_956938.2"/>
</dbReference>
<dbReference type="SMR" id="Q7S8V3"/>
<dbReference type="PaxDb" id="5141-EFNCRP00000004081"/>
<dbReference type="EnsemblFungi" id="EAA32795">
    <property type="protein sequence ID" value="EAA32795"/>
    <property type="gene ID" value="NCU08682"/>
</dbReference>
<dbReference type="GeneID" id="3878179"/>
<dbReference type="KEGG" id="ncr:NCU08682"/>
<dbReference type="VEuPathDB" id="FungiDB:NCU08682"/>
<dbReference type="HOGENOM" id="CLU_002935_0_1_1"/>
<dbReference type="InParanoid" id="Q7S8V3"/>
<dbReference type="OrthoDB" id="21629at2759"/>
<dbReference type="Proteomes" id="UP000001805">
    <property type="component" value="Chromosome 4, Linkage Group IV"/>
</dbReference>
<dbReference type="GO" id="GO:0005737">
    <property type="term" value="C:cytoplasm"/>
    <property type="evidence" value="ECO:0007669"/>
    <property type="project" value="UniProtKB-SubCell"/>
</dbReference>
<dbReference type="InterPro" id="IPR051195">
    <property type="entry name" value="Fungal_stress_NST1"/>
</dbReference>
<dbReference type="InterPro" id="IPR025279">
    <property type="entry name" value="NST1"/>
</dbReference>
<dbReference type="PANTHER" id="PTHR31780:SF10">
    <property type="entry name" value="LD36051P"/>
    <property type="match status" value="1"/>
</dbReference>
<dbReference type="PANTHER" id="PTHR31780">
    <property type="entry name" value="STRESS RESPONSE PROTEIN NST1-RELATED"/>
    <property type="match status" value="1"/>
</dbReference>
<dbReference type="Pfam" id="PF13945">
    <property type="entry name" value="NST1"/>
    <property type="match status" value="1"/>
</dbReference>
<gene>
    <name type="primary">nst1</name>
    <name type="ORF">NCU08682</name>
</gene>
<organism>
    <name type="scientific">Neurospora crassa (strain ATCC 24698 / 74-OR23-1A / CBS 708.71 / DSM 1257 / FGSC 987)</name>
    <dbReference type="NCBI Taxonomy" id="367110"/>
    <lineage>
        <taxon>Eukaryota</taxon>
        <taxon>Fungi</taxon>
        <taxon>Dikarya</taxon>
        <taxon>Ascomycota</taxon>
        <taxon>Pezizomycotina</taxon>
        <taxon>Sordariomycetes</taxon>
        <taxon>Sordariomycetidae</taxon>
        <taxon>Sordariales</taxon>
        <taxon>Sordariaceae</taxon>
        <taxon>Neurospora</taxon>
    </lineage>
</organism>
<comment type="function">
    <text evidence="1">May act as a negative regulator of salt tolerance.</text>
</comment>
<comment type="subcellular location">
    <subcellularLocation>
        <location evidence="1">Cytoplasm</location>
    </subcellularLocation>
</comment>
<comment type="similarity">
    <text evidence="4">Belongs to the NST1 family.</text>
</comment>
<accession>Q7S8V3</accession>
<proteinExistence type="inferred from homology"/>
<protein>
    <recommendedName>
        <fullName>Stress response protein nst1</fullName>
    </recommendedName>
</protein>
<evidence type="ECO:0000250" key="1"/>
<evidence type="ECO:0000255" key="2"/>
<evidence type="ECO:0000256" key="3">
    <source>
        <dbReference type="SAM" id="MobiDB-lite"/>
    </source>
</evidence>
<evidence type="ECO:0000305" key="4"/>
<reference key="1">
    <citation type="journal article" date="2003" name="Nature">
        <title>The genome sequence of the filamentous fungus Neurospora crassa.</title>
        <authorList>
            <person name="Galagan J.E."/>
            <person name="Calvo S.E."/>
            <person name="Borkovich K.A."/>
            <person name="Selker E.U."/>
            <person name="Read N.D."/>
            <person name="Jaffe D.B."/>
            <person name="FitzHugh W."/>
            <person name="Ma L.-J."/>
            <person name="Smirnov S."/>
            <person name="Purcell S."/>
            <person name="Rehman B."/>
            <person name="Elkins T."/>
            <person name="Engels R."/>
            <person name="Wang S."/>
            <person name="Nielsen C.B."/>
            <person name="Butler J."/>
            <person name="Endrizzi M."/>
            <person name="Qui D."/>
            <person name="Ianakiev P."/>
            <person name="Bell-Pedersen D."/>
            <person name="Nelson M.A."/>
            <person name="Werner-Washburne M."/>
            <person name="Selitrennikoff C.P."/>
            <person name="Kinsey J.A."/>
            <person name="Braun E.L."/>
            <person name="Zelter A."/>
            <person name="Schulte U."/>
            <person name="Kothe G.O."/>
            <person name="Jedd G."/>
            <person name="Mewes H.-W."/>
            <person name="Staben C."/>
            <person name="Marcotte E."/>
            <person name="Greenberg D."/>
            <person name="Roy A."/>
            <person name="Foley K."/>
            <person name="Naylor J."/>
            <person name="Stange-Thomann N."/>
            <person name="Barrett R."/>
            <person name="Gnerre S."/>
            <person name="Kamal M."/>
            <person name="Kamvysselis M."/>
            <person name="Mauceli E.W."/>
            <person name="Bielke C."/>
            <person name="Rudd S."/>
            <person name="Frishman D."/>
            <person name="Krystofova S."/>
            <person name="Rasmussen C."/>
            <person name="Metzenberg R.L."/>
            <person name="Perkins D.D."/>
            <person name="Kroken S."/>
            <person name="Cogoni C."/>
            <person name="Macino G."/>
            <person name="Catcheside D.E.A."/>
            <person name="Li W."/>
            <person name="Pratt R.J."/>
            <person name="Osmani S.A."/>
            <person name="DeSouza C.P.C."/>
            <person name="Glass N.L."/>
            <person name="Orbach M.J."/>
            <person name="Berglund J.A."/>
            <person name="Voelker R."/>
            <person name="Yarden O."/>
            <person name="Plamann M."/>
            <person name="Seiler S."/>
            <person name="Dunlap J.C."/>
            <person name="Radford A."/>
            <person name="Aramayo R."/>
            <person name="Natvig D.O."/>
            <person name="Alex L.A."/>
            <person name="Mannhaupt G."/>
            <person name="Ebbole D.J."/>
            <person name="Freitag M."/>
            <person name="Paulsen I."/>
            <person name="Sachs M.S."/>
            <person name="Lander E.S."/>
            <person name="Nusbaum C."/>
            <person name="Birren B.W."/>
        </authorList>
    </citation>
    <scope>NUCLEOTIDE SEQUENCE [LARGE SCALE GENOMIC DNA]</scope>
    <source>
        <strain>ATCC 24698 / 74-OR23-1A / CBS 708.71 / DSM 1257 / FGSC 987</strain>
    </source>
</reference>
<name>NST1_NEUCR</name>
<keyword id="KW-0175">Coiled coil</keyword>
<keyword id="KW-0963">Cytoplasm</keyword>
<keyword id="KW-1185">Reference proteome</keyword>
<keyword id="KW-0346">Stress response</keyword>